<gene>
    <name type="primary">Tent2</name>
    <name evidence="8 9" type="synonym">Gld2</name>
    <name evidence="12" type="synonym">Papd4</name>
</gene>
<dbReference type="EC" id="2.7.7.19" evidence="4"/>
<dbReference type="EMBL" id="AM419011">
    <property type="protein sequence ID" value="CAL91354.1"/>
    <property type="molecule type" value="mRNA"/>
</dbReference>
<dbReference type="EMBL" id="BC016629">
    <property type="protein sequence ID" value="AAH16629.1"/>
    <property type="molecule type" value="mRNA"/>
</dbReference>
<dbReference type="EMBL" id="AK033141">
    <property type="protein sequence ID" value="BAC28170.1"/>
    <property type="status" value="ALT_FRAME"/>
    <property type="molecule type" value="mRNA"/>
</dbReference>
<dbReference type="CCDS" id="CCDS26686.1">
    <molecule id="Q91YI6-1"/>
</dbReference>
<dbReference type="CCDS" id="CCDS88498.1">
    <molecule id="Q91YI6-2"/>
</dbReference>
<dbReference type="RefSeq" id="NP_001348465.1">
    <molecule id="Q91YI6-2"/>
    <property type="nucleotide sequence ID" value="NM_001361536.1"/>
</dbReference>
<dbReference type="RefSeq" id="NP_001348466.1">
    <molecule id="Q91YI6-1"/>
    <property type="nucleotide sequence ID" value="NM_001361537.1"/>
</dbReference>
<dbReference type="RefSeq" id="NP_598666.1">
    <molecule id="Q91YI6-1"/>
    <property type="nucleotide sequence ID" value="NM_133905.3"/>
</dbReference>
<dbReference type="RefSeq" id="XP_006517573.1">
    <molecule id="Q91YI6-1"/>
    <property type="nucleotide sequence ID" value="XM_006517510.5"/>
</dbReference>
<dbReference type="RefSeq" id="XP_006517574.1">
    <property type="nucleotide sequence ID" value="XM_006517511.3"/>
</dbReference>
<dbReference type="RefSeq" id="XP_017170820.1">
    <property type="nucleotide sequence ID" value="XM_017315331.1"/>
</dbReference>
<dbReference type="RefSeq" id="XP_030102937.1">
    <molecule id="Q91YI6-2"/>
    <property type="nucleotide sequence ID" value="XM_030247077.2"/>
</dbReference>
<dbReference type="PDB" id="6LBJ">
    <property type="method" value="X-ray"/>
    <property type="resolution" value="2.70 A"/>
    <property type="chains" value="A/B=143-484"/>
</dbReference>
<dbReference type="PDBsum" id="6LBJ"/>
<dbReference type="SMR" id="Q91YI6"/>
<dbReference type="BioGRID" id="221516">
    <property type="interactions" value="3"/>
</dbReference>
<dbReference type="FunCoup" id="Q91YI6">
    <property type="interactions" value="2543"/>
</dbReference>
<dbReference type="IntAct" id="Q91YI6">
    <property type="interactions" value="2"/>
</dbReference>
<dbReference type="STRING" id="10090.ENSMUSP00000048124"/>
<dbReference type="PhosphoSitePlus" id="Q91YI6"/>
<dbReference type="SwissPalm" id="Q91YI6"/>
<dbReference type="PaxDb" id="10090-ENSMUSP00000048124"/>
<dbReference type="PeptideAtlas" id="Q91YI6"/>
<dbReference type="ProteomicsDB" id="267449">
    <molecule id="Q91YI6-1"/>
</dbReference>
<dbReference type="ProteomicsDB" id="267450">
    <molecule id="Q91YI6-2"/>
</dbReference>
<dbReference type="Pumba" id="Q91YI6"/>
<dbReference type="Antibodypedia" id="24569">
    <property type="antibodies" value="102 antibodies from 20 providers"/>
</dbReference>
<dbReference type="DNASU" id="100715"/>
<dbReference type="Ensembl" id="ENSMUST00000048702.7">
    <molecule id="Q91YI6-1"/>
    <property type="protein sequence ID" value="ENSMUSP00000048124.6"/>
    <property type="gene ID" value="ENSMUSG00000042167.7"/>
</dbReference>
<dbReference type="Ensembl" id="ENSMUST00000225868.2">
    <molecule id="Q91YI6-2"/>
    <property type="protein sequence ID" value="ENSMUSP00000153703.2"/>
    <property type="gene ID" value="ENSMUSG00000042167.7"/>
</dbReference>
<dbReference type="GeneID" id="100715"/>
<dbReference type="KEGG" id="mmu:100715"/>
<dbReference type="UCSC" id="uc007rkz.1">
    <molecule id="Q91YI6-2"/>
    <property type="organism name" value="mouse"/>
</dbReference>
<dbReference type="UCSC" id="uc007rla.1">
    <molecule id="Q91YI6-1"/>
    <property type="organism name" value="mouse"/>
</dbReference>
<dbReference type="AGR" id="MGI:2140950"/>
<dbReference type="CTD" id="167153"/>
<dbReference type="MGI" id="MGI:2140950">
    <property type="gene designation" value="Tent2"/>
</dbReference>
<dbReference type="VEuPathDB" id="HostDB:ENSMUSG00000042167"/>
<dbReference type="eggNOG" id="KOG2277">
    <property type="taxonomic scope" value="Eukaryota"/>
</dbReference>
<dbReference type="GeneTree" id="ENSGT00940000156640"/>
<dbReference type="HOGENOM" id="CLU_046147_0_0_1"/>
<dbReference type="InParanoid" id="Q91YI6"/>
<dbReference type="OMA" id="RTYAYAD"/>
<dbReference type="OrthoDB" id="2274644at2759"/>
<dbReference type="PhylomeDB" id="Q91YI6"/>
<dbReference type="TreeFam" id="TF315661"/>
<dbReference type="BRENDA" id="2.7.7.19">
    <property type="organism ID" value="3474"/>
</dbReference>
<dbReference type="BioGRID-ORCS" id="100715">
    <property type="hits" value="0 hits in 74 CRISPR screens"/>
</dbReference>
<dbReference type="ChiTaRS" id="Papd4">
    <property type="organism name" value="mouse"/>
</dbReference>
<dbReference type="PRO" id="PR:Q91YI6"/>
<dbReference type="Proteomes" id="UP000000589">
    <property type="component" value="Chromosome 13"/>
</dbReference>
<dbReference type="RNAct" id="Q91YI6">
    <property type="molecule type" value="protein"/>
</dbReference>
<dbReference type="Bgee" id="ENSMUSG00000042167">
    <property type="expression patterns" value="Expressed in uterus and 71 other cell types or tissues"/>
</dbReference>
<dbReference type="ExpressionAtlas" id="Q91YI6">
    <property type="expression patterns" value="baseline and differential"/>
</dbReference>
<dbReference type="GO" id="GO:0005737">
    <property type="term" value="C:cytoplasm"/>
    <property type="evidence" value="ECO:0007669"/>
    <property type="project" value="UniProtKB-SubCell"/>
</dbReference>
<dbReference type="GO" id="GO:0005634">
    <property type="term" value="C:nucleus"/>
    <property type="evidence" value="ECO:0000314"/>
    <property type="project" value="MGI"/>
</dbReference>
<dbReference type="GO" id="GO:0005524">
    <property type="term" value="F:ATP binding"/>
    <property type="evidence" value="ECO:0007669"/>
    <property type="project" value="UniProtKB-KW"/>
</dbReference>
<dbReference type="GO" id="GO:0046872">
    <property type="term" value="F:metal ion binding"/>
    <property type="evidence" value="ECO:0007669"/>
    <property type="project" value="UniProtKB-KW"/>
</dbReference>
<dbReference type="GO" id="GO:1990817">
    <property type="term" value="F:poly(A) RNA polymerase activity"/>
    <property type="evidence" value="ECO:0000315"/>
    <property type="project" value="FlyBase"/>
</dbReference>
<dbReference type="GO" id="GO:0002244">
    <property type="term" value="P:hematopoietic progenitor cell differentiation"/>
    <property type="evidence" value="ECO:0000315"/>
    <property type="project" value="MGI"/>
</dbReference>
<dbReference type="GO" id="GO:0071044">
    <property type="term" value="P:histone mRNA catabolic process"/>
    <property type="evidence" value="ECO:0000250"/>
    <property type="project" value="UniProtKB"/>
</dbReference>
<dbReference type="GO" id="GO:0031124">
    <property type="term" value="P:mRNA 3'-end processing"/>
    <property type="evidence" value="ECO:0007669"/>
    <property type="project" value="Ensembl"/>
</dbReference>
<dbReference type="GO" id="GO:2000626">
    <property type="term" value="P:negative regulation of miRNA catabolic process"/>
    <property type="evidence" value="ECO:0000250"/>
    <property type="project" value="UniProtKB"/>
</dbReference>
<dbReference type="GO" id="GO:0140958">
    <property type="term" value="P:target-directed miRNA degradation"/>
    <property type="evidence" value="ECO:0000315"/>
    <property type="project" value="FlyBase"/>
</dbReference>
<dbReference type="CDD" id="cd05402">
    <property type="entry name" value="NT_PAP_TUTase"/>
    <property type="match status" value="1"/>
</dbReference>
<dbReference type="FunFam" id="1.10.1410.10:FF:000007">
    <property type="entry name" value="poly(A) RNA polymerase GLD2 isoform X1"/>
    <property type="match status" value="1"/>
</dbReference>
<dbReference type="FunFam" id="3.30.460.10:FF:000022">
    <property type="entry name" value="poly(A) RNA polymerase GLD2 isoform X1"/>
    <property type="match status" value="1"/>
</dbReference>
<dbReference type="Gene3D" id="1.10.1410.10">
    <property type="match status" value="1"/>
</dbReference>
<dbReference type="Gene3D" id="3.30.460.10">
    <property type="entry name" value="Beta Polymerase, domain 2"/>
    <property type="match status" value="1"/>
</dbReference>
<dbReference type="InterPro" id="IPR054708">
    <property type="entry name" value="MTPAP-like_central"/>
</dbReference>
<dbReference type="InterPro" id="IPR043519">
    <property type="entry name" value="NT_sf"/>
</dbReference>
<dbReference type="InterPro" id="IPR002058">
    <property type="entry name" value="PAP_assoc"/>
</dbReference>
<dbReference type="PANTHER" id="PTHR12271">
    <property type="entry name" value="POLY A POLYMERASE CID PAP -RELATED"/>
    <property type="match status" value="1"/>
</dbReference>
<dbReference type="PANTHER" id="PTHR12271:SF40">
    <property type="entry name" value="POLY(A) RNA POLYMERASE GLD2"/>
    <property type="match status" value="1"/>
</dbReference>
<dbReference type="Pfam" id="PF22600">
    <property type="entry name" value="MTPAP-like_central"/>
    <property type="match status" value="1"/>
</dbReference>
<dbReference type="Pfam" id="PF03828">
    <property type="entry name" value="PAP_assoc"/>
    <property type="match status" value="1"/>
</dbReference>
<dbReference type="SUPFAM" id="SSF81301">
    <property type="entry name" value="Nucleotidyltransferase"/>
    <property type="match status" value="1"/>
</dbReference>
<dbReference type="SUPFAM" id="SSF81631">
    <property type="entry name" value="PAP/OAS1 substrate-binding domain"/>
    <property type="match status" value="1"/>
</dbReference>
<sequence>MFPNSILGRPPFTPTHQQHNNFFALSPTLYSHQQLIDAQFNFQNVDLSRAVSLQPLTYGTVSPIQTSTSPLFRGRKRISDEKAFPLDGKRQRFHSPHQEPTIINQLVPLSGDRRYSMPPLFHTHYIPDIVRCVPPLREIPLLEPREITLPEAKDKLSQQILELFETCQQQASDLKKKELCRAQLQREIQLLFPQSRLFLVGSSLNGFGARSSDGDLCLVVKEEPCFFQVNQKTEARHILTLVHKHFCTRLSGYIERPQLIRAKVPIVKFRDKVSCVEFDLNVNNTVGIRNTFLLRTYAYLENRVRPLVLVIKKWASHHDINDASRGTLSSYSLVLMVLHYLQTLPEPILPSLQKIYPESFSTSVQLHLVHHAPCNVPPYLSKNESSLGDLLLGFLKYYATEFDWNTQMISVREAKAIPRPDDMEWRNKYICVEEPFDGTNTARAVHEKQKFDMIKDQFLKSWQRLKNKRDLNSVLPLRAATLKR</sequence>
<keyword id="KW-0002">3D-structure</keyword>
<keyword id="KW-0025">Alternative splicing</keyword>
<keyword id="KW-0067">ATP-binding</keyword>
<keyword id="KW-0963">Cytoplasm</keyword>
<keyword id="KW-0460">Magnesium</keyword>
<keyword id="KW-0464">Manganese</keyword>
<keyword id="KW-0479">Metal-binding</keyword>
<keyword id="KW-0507">mRNA processing</keyword>
<keyword id="KW-0547">Nucleotide-binding</keyword>
<keyword id="KW-0539">Nucleus</keyword>
<keyword id="KW-0597">Phosphoprotein</keyword>
<keyword id="KW-1185">Reference proteome</keyword>
<keyword id="KW-0808">Transferase</keyword>
<reference key="1">
    <citation type="submission" date="2006-11" db="EMBL/GenBank/DDBJ databases">
        <title>XRbm9, a new XGld2-interacting protein, enhances translation in Xenopus oocytes.</title>
        <authorList>
            <person name="Papin C."/>
        </authorList>
    </citation>
    <scope>NUCLEOTIDE SEQUENCE [MRNA] (ISOFORM 2)</scope>
    <source>
        <strain>NIH Swiss</strain>
    </source>
</reference>
<reference key="2">
    <citation type="journal article" date="2004" name="Genome Res.">
        <title>The status, quality, and expansion of the NIH full-length cDNA project: the Mammalian Gene Collection (MGC).</title>
        <authorList>
            <consortium name="The MGC Project Team"/>
        </authorList>
    </citation>
    <scope>NUCLEOTIDE SEQUENCE [LARGE SCALE MRNA] (ISOFORM 1)</scope>
    <source>
        <strain>FVB/N</strain>
        <tissue>Mammary tumor</tissue>
    </source>
</reference>
<reference key="3">
    <citation type="journal article" date="2005" name="Science">
        <title>The transcriptional landscape of the mammalian genome.</title>
        <authorList>
            <person name="Carninci P."/>
            <person name="Kasukawa T."/>
            <person name="Katayama S."/>
            <person name="Gough J."/>
            <person name="Frith M.C."/>
            <person name="Maeda N."/>
            <person name="Oyama R."/>
            <person name="Ravasi T."/>
            <person name="Lenhard B."/>
            <person name="Wells C."/>
            <person name="Kodzius R."/>
            <person name="Shimokawa K."/>
            <person name="Bajic V.B."/>
            <person name="Brenner S.E."/>
            <person name="Batalov S."/>
            <person name="Forrest A.R."/>
            <person name="Zavolan M."/>
            <person name="Davis M.J."/>
            <person name="Wilming L.G."/>
            <person name="Aidinis V."/>
            <person name="Allen J.E."/>
            <person name="Ambesi-Impiombato A."/>
            <person name="Apweiler R."/>
            <person name="Aturaliya R.N."/>
            <person name="Bailey T.L."/>
            <person name="Bansal M."/>
            <person name="Baxter L."/>
            <person name="Beisel K.W."/>
            <person name="Bersano T."/>
            <person name="Bono H."/>
            <person name="Chalk A.M."/>
            <person name="Chiu K.P."/>
            <person name="Choudhary V."/>
            <person name="Christoffels A."/>
            <person name="Clutterbuck D.R."/>
            <person name="Crowe M.L."/>
            <person name="Dalla E."/>
            <person name="Dalrymple B.P."/>
            <person name="de Bono B."/>
            <person name="Della Gatta G."/>
            <person name="di Bernardo D."/>
            <person name="Down T."/>
            <person name="Engstrom P."/>
            <person name="Fagiolini M."/>
            <person name="Faulkner G."/>
            <person name="Fletcher C.F."/>
            <person name="Fukushima T."/>
            <person name="Furuno M."/>
            <person name="Futaki S."/>
            <person name="Gariboldi M."/>
            <person name="Georgii-Hemming P."/>
            <person name="Gingeras T.R."/>
            <person name="Gojobori T."/>
            <person name="Green R.E."/>
            <person name="Gustincich S."/>
            <person name="Harbers M."/>
            <person name="Hayashi Y."/>
            <person name="Hensch T.K."/>
            <person name="Hirokawa N."/>
            <person name="Hill D."/>
            <person name="Huminiecki L."/>
            <person name="Iacono M."/>
            <person name="Ikeo K."/>
            <person name="Iwama A."/>
            <person name="Ishikawa T."/>
            <person name="Jakt M."/>
            <person name="Kanapin A."/>
            <person name="Katoh M."/>
            <person name="Kawasawa Y."/>
            <person name="Kelso J."/>
            <person name="Kitamura H."/>
            <person name="Kitano H."/>
            <person name="Kollias G."/>
            <person name="Krishnan S.P."/>
            <person name="Kruger A."/>
            <person name="Kummerfeld S.K."/>
            <person name="Kurochkin I.V."/>
            <person name="Lareau L.F."/>
            <person name="Lazarevic D."/>
            <person name="Lipovich L."/>
            <person name="Liu J."/>
            <person name="Liuni S."/>
            <person name="McWilliam S."/>
            <person name="Madan Babu M."/>
            <person name="Madera M."/>
            <person name="Marchionni L."/>
            <person name="Matsuda H."/>
            <person name="Matsuzawa S."/>
            <person name="Miki H."/>
            <person name="Mignone F."/>
            <person name="Miyake S."/>
            <person name="Morris K."/>
            <person name="Mottagui-Tabar S."/>
            <person name="Mulder N."/>
            <person name="Nakano N."/>
            <person name="Nakauchi H."/>
            <person name="Ng P."/>
            <person name="Nilsson R."/>
            <person name="Nishiguchi S."/>
            <person name="Nishikawa S."/>
            <person name="Nori F."/>
            <person name="Ohara O."/>
            <person name="Okazaki Y."/>
            <person name="Orlando V."/>
            <person name="Pang K.C."/>
            <person name="Pavan W.J."/>
            <person name="Pavesi G."/>
            <person name="Pesole G."/>
            <person name="Petrovsky N."/>
            <person name="Piazza S."/>
            <person name="Reed J."/>
            <person name="Reid J.F."/>
            <person name="Ring B.Z."/>
            <person name="Ringwald M."/>
            <person name="Rost B."/>
            <person name="Ruan Y."/>
            <person name="Salzberg S.L."/>
            <person name="Sandelin A."/>
            <person name="Schneider C."/>
            <person name="Schoenbach C."/>
            <person name="Sekiguchi K."/>
            <person name="Semple C.A."/>
            <person name="Seno S."/>
            <person name="Sessa L."/>
            <person name="Sheng Y."/>
            <person name="Shibata Y."/>
            <person name="Shimada H."/>
            <person name="Shimada K."/>
            <person name="Silva D."/>
            <person name="Sinclair B."/>
            <person name="Sperling S."/>
            <person name="Stupka E."/>
            <person name="Sugiura K."/>
            <person name="Sultana R."/>
            <person name="Takenaka Y."/>
            <person name="Taki K."/>
            <person name="Tammoja K."/>
            <person name="Tan S.L."/>
            <person name="Tang S."/>
            <person name="Taylor M.S."/>
            <person name="Tegner J."/>
            <person name="Teichmann S.A."/>
            <person name="Ueda H.R."/>
            <person name="van Nimwegen E."/>
            <person name="Verardo R."/>
            <person name="Wei C.L."/>
            <person name="Yagi K."/>
            <person name="Yamanishi H."/>
            <person name="Zabarovsky E."/>
            <person name="Zhu S."/>
            <person name="Zimmer A."/>
            <person name="Hide W."/>
            <person name="Bult C."/>
            <person name="Grimmond S.M."/>
            <person name="Teasdale R.D."/>
            <person name="Liu E.T."/>
            <person name="Brusic V."/>
            <person name="Quackenbush J."/>
            <person name="Wahlestedt C."/>
            <person name="Mattick J.S."/>
            <person name="Hume D.A."/>
            <person name="Kai C."/>
            <person name="Sasaki D."/>
            <person name="Tomaru Y."/>
            <person name="Fukuda S."/>
            <person name="Kanamori-Katayama M."/>
            <person name="Suzuki M."/>
            <person name="Aoki J."/>
            <person name="Arakawa T."/>
            <person name="Iida J."/>
            <person name="Imamura K."/>
            <person name="Itoh M."/>
            <person name="Kato T."/>
            <person name="Kawaji H."/>
            <person name="Kawagashira N."/>
            <person name="Kawashima T."/>
            <person name="Kojima M."/>
            <person name="Kondo S."/>
            <person name="Konno H."/>
            <person name="Nakano K."/>
            <person name="Ninomiya N."/>
            <person name="Nishio T."/>
            <person name="Okada M."/>
            <person name="Plessy C."/>
            <person name="Shibata K."/>
            <person name="Shiraki T."/>
            <person name="Suzuki S."/>
            <person name="Tagami M."/>
            <person name="Waki K."/>
            <person name="Watahiki A."/>
            <person name="Okamura-Oho Y."/>
            <person name="Suzuki H."/>
            <person name="Kawai J."/>
            <person name="Hayashizaki Y."/>
        </authorList>
    </citation>
    <scope>NUCLEOTIDE SEQUENCE [LARGE SCALE MRNA] OF 147-484</scope>
    <source>
        <strain>C57BL/6J</strain>
        <tissue>Testis</tissue>
    </source>
</reference>
<reference key="4">
    <citation type="journal article" date="2004" name="Proc. Natl. Acad. Sci. U.S.A.">
        <title>Mammalian GLD-2 homologs are poly(A) polymerases.</title>
        <authorList>
            <person name="Kwak J.E."/>
            <person name="Wang L."/>
            <person name="Ballantyne S."/>
            <person name="Kimble J."/>
            <person name="Wickens M."/>
        </authorList>
    </citation>
    <scope>ENZYME ACTIVITY</scope>
</reference>
<reference key="5">
    <citation type="journal article" date="2005" name="RNA">
        <title>Vertebrate GLD2 poly(A) polymerases in the germline and the brain.</title>
        <authorList>
            <person name="Rouhana L."/>
            <person name="Wang L."/>
            <person name="Buter N."/>
            <person name="Kwak J.E."/>
            <person name="Schiltz C.A."/>
            <person name="Gonzalez T."/>
            <person name="Kelley A.E."/>
            <person name="Landry C.F."/>
            <person name="Wickens M."/>
        </authorList>
    </citation>
    <scope>TISSUE SPECIFICITY</scope>
</reference>
<reference key="6">
    <citation type="journal article" date="2006" name="Dev. Biol.">
        <title>Possible role of mouse poly(A) polymerase mGLD-2 during oocyte maturation.</title>
        <authorList>
            <person name="Nakanishi T."/>
            <person name="Kubota H."/>
            <person name="Ishibashi N."/>
            <person name="Kumagai S."/>
            <person name="Watanabe H."/>
            <person name="Yamashita M."/>
            <person name="Kashiwabara S."/>
            <person name="Miyado K."/>
            <person name="Baba T."/>
        </authorList>
    </citation>
    <scope>SUBCELLULAR LOCATION</scope>
    <scope>TISSUE SPECIFICITY</scope>
    <scope>DEVELOPMENTAL STAGE</scope>
    <scope>MUTAGENESIS OF ASP-215</scope>
</reference>
<reference key="7">
    <citation type="journal article" date="2007" name="Biochem. Biophys. Res. Commun.">
        <title>Disruption of mouse poly(A) polymerase mGLD-2 does not alter polyadenylation status in oocytes and somatic cells.</title>
        <authorList>
            <person name="Nakanishi T."/>
            <person name="Kumagai S."/>
            <person name="Kimura M."/>
            <person name="Watanabe H."/>
            <person name="Sakurai T."/>
            <person name="Kimura M."/>
            <person name="Kashiwabara S."/>
            <person name="Baba T."/>
        </authorList>
    </citation>
    <scope>DISRUPTION PHENOTYPE</scope>
    <scope>INTERACTION WITH CPEB1; CPEB2; CPSF1 AND PABPC1</scope>
</reference>
<proteinExistence type="evidence at protein level"/>
<comment type="function">
    <text evidence="2">Cytoplasmic poly(A) RNA polymerase that adds successive AMP monomers to the 3'-end of specific RNAs, forming a poly(A) tail. In contrast to the canonical nuclear poly(A) RNA polymerase, it only adds poly(A) to selected cytoplasmic mRNAs. Does not play a role in replication-dependent histone mRNA degradation. Adds a single nucleotide to the 3' end of specific miRNAs, monoadenylation stabilizes and prolongs the activity of some but not all miRNAs.</text>
</comment>
<comment type="catalytic activity">
    <reaction evidence="4">
        <text>RNA(n) + ATP = RNA(n)-3'-adenine ribonucleotide + diphosphate</text>
        <dbReference type="Rhea" id="RHEA:11332"/>
        <dbReference type="Rhea" id="RHEA-COMP:14527"/>
        <dbReference type="Rhea" id="RHEA-COMP:17347"/>
        <dbReference type="ChEBI" id="CHEBI:30616"/>
        <dbReference type="ChEBI" id="CHEBI:33019"/>
        <dbReference type="ChEBI" id="CHEBI:140395"/>
        <dbReference type="ChEBI" id="CHEBI:173115"/>
        <dbReference type="EC" id="2.7.7.19"/>
    </reaction>
</comment>
<comment type="cofactor">
    <cofactor evidence="1">
        <name>Mg(2+)</name>
        <dbReference type="ChEBI" id="CHEBI:18420"/>
    </cofactor>
    <cofactor evidence="1">
        <name>Mn(2+)</name>
        <dbReference type="ChEBI" id="CHEBI:29035"/>
    </cofactor>
</comment>
<comment type="subunit">
    <text evidence="2 7">Interacts with CPEB1, CPEB2, CPSF1 and PABPC1 (PubMed:17927953). Interacts with QKI isoform QKI7; promoting recruitment to miRNA miR-122 and miR-122 stabilization (By similarity).</text>
</comment>
<comment type="subcellular location">
    <subcellularLocation>
        <location evidence="6">Cytoplasm</location>
    </subcellularLocation>
    <subcellularLocation>
        <location evidence="6">Nucleus</location>
    </subcellularLocation>
</comment>
<comment type="alternative products">
    <event type="alternative splicing"/>
    <isoform>
        <id>Q91YI6-1</id>
        <name>1</name>
        <sequence type="displayed"/>
    </isoform>
    <isoform>
        <id>Q91YI6-2</id>
        <name>2</name>
        <sequence type="described" ref="VSP_034325"/>
    </isoform>
</comment>
<comment type="tissue specificity">
    <text evidence="5 6">Ubiquitous. In brain, it is highly expressed in the cerebral cortex, cerebellum, hippocampus and olfactory bulb.</text>
</comment>
<comment type="developmental stage">
    <text evidence="6">Expressed in oocytes from metaphase I to metaphase II during oocyte maturation.</text>
</comment>
<comment type="disruption phenotype">
    <text evidence="7">Mice are normal and healthy. Poly-A tail elongation in oocytes is not affected and mice are fertile.</text>
</comment>
<comment type="similarity">
    <text evidence="11">Belongs to the DNA polymerase type-B-like family. GLD2 subfamily.</text>
</comment>
<comment type="sequence caution" evidence="11">
    <conflict type="frameshift">
        <sequence resource="EMBL-CDS" id="BAC28170"/>
    </conflict>
</comment>
<protein>
    <recommendedName>
        <fullName evidence="11">Poly(A) RNA polymerase GLD2</fullName>
        <shortName evidence="11">mGLD-2</shortName>
        <ecNumber evidence="4">2.7.7.19</ecNumber>
    </recommendedName>
    <alternativeName>
        <fullName>PAP-associated domain-containing protein 4</fullName>
    </alternativeName>
    <alternativeName>
        <fullName evidence="2">Terminal nucleotidyltransferase 2</fullName>
    </alternativeName>
</protein>
<organism>
    <name type="scientific">Mus musculus</name>
    <name type="common">Mouse</name>
    <dbReference type="NCBI Taxonomy" id="10090"/>
    <lineage>
        <taxon>Eukaryota</taxon>
        <taxon>Metazoa</taxon>
        <taxon>Chordata</taxon>
        <taxon>Craniata</taxon>
        <taxon>Vertebrata</taxon>
        <taxon>Euteleostomi</taxon>
        <taxon>Mammalia</taxon>
        <taxon>Eutheria</taxon>
        <taxon>Euarchontoglires</taxon>
        <taxon>Glires</taxon>
        <taxon>Rodentia</taxon>
        <taxon>Myomorpha</taxon>
        <taxon>Muroidea</taxon>
        <taxon>Muridae</taxon>
        <taxon>Murinae</taxon>
        <taxon>Mus</taxon>
        <taxon>Mus</taxon>
    </lineage>
</organism>
<name>GLD2_MOUSE</name>
<evidence type="ECO:0000250" key="1">
    <source>
        <dbReference type="UniProtKB" id="O13833"/>
    </source>
</evidence>
<evidence type="ECO:0000250" key="2">
    <source>
        <dbReference type="UniProtKB" id="Q6PIY7"/>
    </source>
</evidence>
<evidence type="ECO:0000255" key="3"/>
<evidence type="ECO:0000269" key="4">
    <source>
    </source>
</evidence>
<evidence type="ECO:0000269" key="5">
    <source>
    </source>
</evidence>
<evidence type="ECO:0000269" key="6">
    <source>
    </source>
</evidence>
<evidence type="ECO:0000269" key="7">
    <source>
    </source>
</evidence>
<evidence type="ECO:0000303" key="8">
    <source>
    </source>
</evidence>
<evidence type="ECO:0000303" key="9">
    <source>
    </source>
</evidence>
<evidence type="ECO:0000303" key="10">
    <source ref="1"/>
</evidence>
<evidence type="ECO:0000305" key="11"/>
<evidence type="ECO:0000312" key="12">
    <source>
        <dbReference type="MGI" id="MGI:2140950"/>
    </source>
</evidence>
<evidence type="ECO:0007829" key="13">
    <source>
        <dbReference type="PDB" id="6LBJ"/>
    </source>
</evidence>
<feature type="chain" id="PRO_0000341550" description="Poly(A) RNA polymerase GLD2">
    <location>
        <begin position="1"/>
        <end position="484"/>
    </location>
</feature>
<feature type="domain" description="PAP-associated">
    <location>
        <begin position="386"/>
        <end position="440"/>
    </location>
</feature>
<feature type="short sequence motif" description="Nuclear localization signal" evidence="3">
    <location>
        <begin position="76"/>
        <end position="92"/>
    </location>
</feature>
<feature type="binding site" evidence="1">
    <location>
        <position position="213"/>
    </location>
    <ligand>
        <name>Mg(2+)</name>
        <dbReference type="ChEBI" id="CHEBI:18420"/>
        <note>catalytic</note>
    </ligand>
</feature>
<feature type="binding site" evidence="1">
    <location>
        <position position="215"/>
    </location>
    <ligand>
        <name>Mg(2+)</name>
        <dbReference type="ChEBI" id="CHEBI:18420"/>
        <note>catalytic</note>
    </ligand>
</feature>
<feature type="modified residue" description="Phosphoserine" evidence="2">
    <location>
        <position position="62"/>
    </location>
</feature>
<feature type="modified residue" description="Phosphoserine" evidence="2">
    <location>
        <position position="69"/>
    </location>
</feature>
<feature type="modified residue" description="Phosphoserine" evidence="2">
    <location>
        <position position="95"/>
    </location>
</feature>
<feature type="splice variant" id="VSP_034325" description="In isoform 2." evidence="10">
    <location>
        <begin position="225"/>
        <end position="228"/>
    </location>
</feature>
<feature type="mutagenesis site" description="Loss of enzyme activity." evidence="6">
    <original>D</original>
    <variation>A</variation>
    <location>
        <position position="215"/>
    </location>
</feature>
<feature type="sequence conflict" description="In Ref. 3; BAC28170." evidence="11" ref="3">
    <original>P</original>
    <variation>T</variation>
    <location>
        <position position="357"/>
    </location>
</feature>
<feature type="helix" evidence="13">
    <location>
        <begin position="155"/>
        <end position="167"/>
    </location>
</feature>
<feature type="helix" evidence="13">
    <location>
        <begin position="171"/>
        <end position="191"/>
    </location>
</feature>
<feature type="strand" evidence="13">
    <location>
        <begin position="196"/>
        <end position="201"/>
    </location>
</feature>
<feature type="helix" evidence="13">
    <location>
        <begin position="202"/>
        <end position="205"/>
    </location>
</feature>
<feature type="strand" evidence="13">
    <location>
        <begin position="214"/>
        <end position="219"/>
    </location>
</feature>
<feature type="helix" evidence="13">
    <location>
        <begin position="234"/>
        <end position="248"/>
    </location>
</feature>
<feature type="turn" evidence="13">
    <location>
        <begin position="251"/>
        <end position="253"/>
    </location>
</feature>
<feature type="strand" evidence="13">
    <location>
        <begin position="254"/>
        <end position="260"/>
    </location>
</feature>
<feature type="strand" evidence="13">
    <location>
        <begin position="262"/>
        <end position="264"/>
    </location>
</feature>
<feature type="strand" evidence="13">
    <location>
        <begin position="266"/>
        <end position="271"/>
    </location>
</feature>
<feature type="turn" evidence="13">
    <location>
        <begin position="272"/>
        <end position="275"/>
    </location>
</feature>
<feature type="strand" evidence="13">
    <location>
        <begin position="276"/>
        <end position="283"/>
    </location>
</feature>
<feature type="helix" evidence="13">
    <location>
        <begin position="286"/>
        <end position="300"/>
    </location>
</feature>
<feature type="helix" evidence="13">
    <location>
        <begin position="304"/>
        <end position="317"/>
    </location>
</feature>
<feature type="turn" evidence="13">
    <location>
        <begin position="323"/>
        <end position="326"/>
    </location>
</feature>
<feature type="helix" evidence="13">
    <location>
        <begin position="330"/>
        <end position="342"/>
    </location>
</feature>
<feature type="strand" evidence="13">
    <location>
        <begin position="343"/>
        <end position="346"/>
    </location>
</feature>
<feature type="helix" evidence="13">
    <location>
        <begin position="352"/>
        <end position="355"/>
    </location>
</feature>
<feature type="turn" evidence="13">
    <location>
        <begin position="357"/>
        <end position="360"/>
    </location>
</feature>
<feature type="helix" evidence="13">
    <location>
        <begin position="366"/>
        <end position="369"/>
    </location>
</feature>
<feature type="turn" evidence="13">
    <location>
        <begin position="370"/>
        <end position="375"/>
    </location>
</feature>
<feature type="helix" evidence="13">
    <location>
        <begin position="387"/>
        <end position="399"/>
    </location>
</feature>
<feature type="turn" evidence="13">
    <location>
        <begin position="404"/>
        <end position="406"/>
    </location>
</feature>
<feature type="strand" evidence="13">
    <location>
        <begin position="407"/>
        <end position="410"/>
    </location>
</feature>
<feature type="turn" evidence="13">
    <location>
        <begin position="411"/>
        <end position="414"/>
    </location>
</feature>
<feature type="strand" evidence="13">
    <location>
        <begin position="415"/>
        <end position="418"/>
    </location>
</feature>
<feature type="helix" evidence="13">
    <location>
        <begin position="423"/>
        <end position="426"/>
    </location>
</feature>
<feature type="strand" evidence="13">
    <location>
        <begin position="435"/>
        <end position="438"/>
    </location>
</feature>
<feature type="turn" evidence="13">
    <location>
        <begin position="441"/>
        <end position="444"/>
    </location>
</feature>
<feature type="helix" evidence="13">
    <location>
        <begin position="448"/>
        <end position="467"/>
    </location>
</feature>
<feature type="helix" evidence="13">
    <location>
        <begin position="471"/>
        <end position="473"/>
    </location>
</feature>
<accession>Q91YI6</accession>
<accession>A4F5H0</accession>
<accession>Q8CCH5</accession>